<sequence length="132" mass="14471">MTMTDPIADFLTRLRNANSAYHDEVTLPHSKLKANIAEILKREGYISDYRTEDARVGKSLVVQLKYGPSRERSIAGLRRVSKPGLRVYAKSTNLPRVLGGLGVAIISTSSGLLTDRQAARQGVGGEVLAYVW</sequence>
<keyword id="KW-0002">3D-structure</keyword>
<keyword id="KW-1185">Reference proteome</keyword>
<keyword id="KW-0687">Ribonucleoprotein</keyword>
<keyword id="KW-0689">Ribosomal protein</keyword>
<keyword id="KW-0694">RNA-binding</keyword>
<keyword id="KW-0699">rRNA-binding</keyword>
<comment type="function">
    <text evidence="1">One of the primary rRNA binding proteins, it binds directly to 16S rRNA central domain where it helps coordinate assembly of the platform of the 30S subunit.</text>
</comment>
<comment type="subunit">
    <text evidence="1">Part of the 30S ribosomal subunit. Contacts proteins S5 and S12.</text>
</comment>
<comment type="similarity">
    <text evidence="1">Belongs to the universal ribosomal protein uS8 family.</text>
</comment>
<feature type="initiator methionine" description="Removed" evidence="2">
    <location>
        <position position="1"/>
    </location>
</feature>
<feature type="chain" id="PRO_0000305750" description="Small ribosomal subunit protein uS8">
    <location>
        <begin position="2"/>
        <end position="132"/>
    </location>
</feature>
<feature type="helix" evidence="5">
    <location>
        <begin position="7"/>
        <end position="19"/>
    </location>
</feature>
<feature type="strand" evidence="5">
    <location>
        <begin position="23"/>
        <end position="28"/>
    </location>
</feature>
<feature type="helix" evidence="5">
    <location>
        <begin position="31"/>
        <end position="42"/>
    </location>
</feature>
<feature type="strand" evidence="5">
    <location>
        <begin position="45"/>
        <end position="50"/>
    </location>
</feature>
<feature type="strand" evidence="5">
    <location>
        <begin position="55"/>
        <end position="57"/>
    </location>
</feature>
<feature type="strand" evidence="5">
    <location>
        <begin position="59"/>
        <end position="64"/>
    </location>
</feature>
<feature type="strand" evidence="5">
    <location>
        <begin position="77"/>
        <end position="79"/>
    </location>
</feature>
<feature type="strand" evidence="5">
    <location>
        <begin position="83"/>
        <end position="85"/>
    </location>
</feature>
<feature type="strand" evidence="4">
    <location>
        <begin position="91"/>
        <end position="93"/>
    </location>
</feature>
<feature type="strand" evidence="5">
    <location>
        <begin position="99"/>
        <end position="107"/>
    </location>
</feature>
<feature type="strand" evidence="5">
    <location>
        <begin position="112"/>
        <end position="114"/>
    </location>
</feature>
<feature type="helix" evidence="5">
    <location>
        <begin position="115"/>
        <end position="121"/>
    </location>
</feature>
<feature type="strand" evidence="5">
    <location>
        <begin position="125"/>
        <end position="131"/>
    </location>
</feature>
<organism>
    <name type="scientific">Mycolicibacterium smegmatis (strain ATCC 700084 / mc(2)155)</name>
    <name type="common">Mycobacterium smegmatis</name>
    <dbReference type="NCBI Taxonomy" id="246196"/>
    <lineage>
        <taxon>Bacteria</taxon>
        <taxon>Bacillati</taxon>
        <taxon>Actinomycetota</taxon>
        <taxon>Actinomycetes</taxon>
        <taxon>Mycobacteriales</taxon>
        <taxon>Mycobacteriaceae</taxon>
        <taxon>Mycolicibacterium</taxon>
    </lineage>
</organism>
<evidence type="ECO:0000255" key="1">
    <source>
        <dbReference type="HAMAP-Rule" id="MF_01302"/>
    </source>
</evidence>
<evidence type="ECO:0000269" key="2">
    <source>
    </source>
</evidence>
<evidence type="ECO:0000305" key="3"/>
<evidence type="ECO:0007829" key="4">
    <source>
        <dbReference type="PDB" id="5O5J"/>
    </source>
</evidence>
<evidence type="ECO:0007829" key="5">
    <source>
        <dbReference type="PDB" id="5XYU"/>
    </source>
</evidence>
<gene>
    <name evidence="1" type="primary">rpsH</name>
    <name type="ordered locus">MSMEG_1469</name>
    <name type="ordered locus">MSMEI_1433</name>
</gene>
<reference key="1">
    <citation type="submission" date="2006-10" db="EMBL/GenBank/DDBJ databases">
        <authorList>
            <person name="Fleischmann R.D."/>
            <person name="Dodson R.J."/>
            <person name="Haft D.H."/>
            <person name="Merkel J.S."/>
            <person name="Nelson W.C."/>
            <person name="Fraser C.M."/>
        </authorList>
    </citation>
    <scope>NUCLEOTIDE SEQUENCE [LARGE SCALE GENOMIC DNA]</scope>
    <source>
        <strain>ATCC 700084 / mc(2)155</strain>
    </source>
</reference>
<reference key="2">
    <citation type="journal article" date="2007" name="Genome Biol.">
        <title>Interrupted coding sequences in Mycobacterium smegmatis: authentic mutations or sequencing errors?</title>
        <authorList>
            <person name="Deshayes C."/>
            <person name="Perrodou E."/>
            <person name="Gallien S."/>
            <person name="Euphrasie D."/>
            <person name="Schaeffer C."/>
            <person name="Van-Dorsselaer A."/>
            <person name="Poch O."/>
            <person name="Lecompte O."/>
            <person name="Reyrat J.-M."/>
        </authorList>
    </citation>
    <scope>NUCLEOTIDE SEQUENCE [LARGE SCALE GENOMIC DNA]</scope>
    <source>
        <strain>ATCC 700084 / mc(2)155</strain>
    </source>
</reference>
<reference key="3">
    <citation type="journal article" date="2009" name="Genome Res.">
        <title>Ortho-proteogenomics: multiple proteomes investigation through orthology and a new MS-based protocol.</title>
        <authorList>
            <person name="Gallien S."/>
            <person name="Perrodou E."/>
            <person name="Carapito C."/>
            <person name="Deshayes C."/>
            <person name="Reyrat J.-M."/>
            <person name="Van Dorsselaer A."/>
            <person name="Poch O."/>
            <person name="Schaeffer C."/>
            <person name="Lecompte O."/>
        </authorList>
    </citation>
    <scope>NUCLEOTIDE SEQUENCE [LARGE SCALE GENOMIC DNA]</scope>
    <scope>IDENTIFICATION BY MASS SPECTROMETRY [LARGE SCALE ANALYSIS]</scope>
    <scope>CLEAVAGE OF INITIATOR METHIONINE</scope>
    <source>
        <strain>ATCC 700084 / mc(2)155</strain>
    </source>
</reference>
<dbReference type="EMBL" id="CP000480">
    <property type="protein sequence ID" value="ABK75423.1"/>
    <property type="molecule type" value="Genomic_DNA"/>
</dbReference>
<dbReference type="EMBL" id="CP001663">
    <property type="protein sequence ID" value="AFP37906.1"/>
    <property type="molecule type" value="Genomic_DNA"/>
</dbReference>
<dbReference type="RefSeq" id="WP_003892856.1">
    <property type="nucleotide sequence ID" value="NZ_SIJM01000016.1"/>
</dbReference>
<dbReference type="RefSeq" id="YP_885851.1">
    <property type="nucleotide sequence ID" value="NC_008596.1"/>
</dbReference>
<dbReference type="PDB" id="5O5J">
    <property type="method" value="EM"/>
    <property type="resolution" value="3.45 A"/>
    <property type="chains" value="H=1-132"/>
</dbReference>
<dbReference type="PDB" id="5O61">
    <property type="method" value="EM"/>
    <property type="resolution" value="3.31 A"/>
    <property type="chains" value="BH=1-132"/>
</dbReference>
<dbReference type="PDB" id="5XYU">
    <property type="method" value="EM"/>
    <property type="resolution" value="3.45 A"/>
    <property type="chains" value="H=1-132"/>
</dbReference>
<dbReference type="PDB" id="5ZEB">
    <property type="method" value="EM"/>
    <property type="resolution" value="3.40 A"/>
    <property type="chains" value="h=1-132"/>
</dbReference>
<dbReference type="PDB" id="5ZEP">
    <property type="method" value="EM"/>
    <property type="resolution" value="3.40 A"/>
    <property type="chains" value="h=1-132"/>
</dbReference>
<dbReference type="PDB" id="5ZEU">
    <property type="method" value="EM"/>
    <property type="resolution" value="3.70 A"/>
    <property type="chains" value="h=1-132"/>
</dbReference>
<dbReference type="PDB" id="6DZI">
    <property type="method" value="EM"/>
    <property type="resolution" value="3.46 A"/>
    <property type="chains" value="q=2-132"/>
</dbReference>
<dbReference type="PDB" id="6DZK">
    <property type="method" value="EM"/>
    <property type="resolution" value="3.60 A"/>
    <property type="chains" value="H=2-132"/>
</dbReference>
<dbReference type="PDB" id="8FR8">
    <property type="method" value="EM"/>
    <property type="resolution" value="2.76 A"/>
    <property type="chains" value="i=2-132"/>
</dbReference>
<dbReference type="PDB" id="8V9J">
    <property type="method" value="EM"/>
    <property type="resolution" value="3.10 A"/>
    <property type="chains" value="h=1-132"/>
</dbReference>
<dbReference type="PDB" id="8V9K">
    <property type="method" value="EM"/>
    <property type="resolution" value="3.10 A"/>
    <property type="chains" value="h=1-132"/>
</dbReference>
<dbReference type="PDB" id="8V9L">
    <property type="method" value="EM"/>
    <property type="resolution" value="3.00 A"/>
    <property type="chains" value="h=1-132"/>
</dbReference>
<dbReference type="PDB" id="8VIO">
    <property type="method" value="EM"/>
    <property type="resolution" value="3.26 A"/>
    <property type="chains" value="n=1-132"/>
</dbReference>
<dbReference type="PDB" id="8WHX">
    <property type="method" value="EM"/>
    <property type="resolution" value="2.80 A"/>
    <property type="chains" value="i=1-132"/>
</dbReference>
<dbReference type="PDB" id="8WI7">
    <property type="method" value="EM"/>
    <property type="resolution" value="3.50 A"/>
    <property type="chains" value="i=1-132"/>
</dbReference>
<dbReference type="PDB" id="8WI9">
    <property type="method" value="EM"/>
    <property type="resolution" value="3.50 A"/>
    <property type="chains" value="i=1-132"/>
</dbReference>
<dbReference type="PDB" id="8WIB">
    <property type="method" value="EM"/>
    <property type="resolution" value="3.50 A"/>
    <property type="chains" value="i=1-132"/>
</dbReference>
<dbReference type="PDB" id="8WID">
    <property type="method" value="EM"/>
    <property type="resolution" value="3.50 A"/>
    <property type="chains" value="i=1-132"/>
</dbReference>
<dbReference type="PDB" id="8WIF">
    <property type="method" value="EM"/>
    <property type="resolution" value="2.90 A"/>
    <property type="chains" value="i=1-132"/>
</dbReference>
<dbReference type="PDBsum" id="5O5J"/>
<dbReference type="PDBsum" id="5O61"/>
<dbReference type="PDBsum" id="5XYU"/>
<dbReference type="PDBsum" id="5ZEB"/>
<dbReference type="PDBsum" id="5ZEP"/>
<dbReference type="PDBsum" id="5ZEU"/>
<dbReference type="PDBsum" id="6DZI"/>
<dbReference type="PDBsum" id="6DZK"/>
<dbReference type="PDBsum" id="8FR8"/>
<dbReference type="PDBsum" id="8V9J"/>
<dbReference type="PDBsum" id="8V9K"/>
<dbReference type="PDBsum" id="8V9L"/>
<dbReference type="PDBsum" id="8VIO"/>
<dbReference type="PDBsum" id="8WHX"/>
<dbReference type="PDBsum" id="8WI7"/>
<dbReference type="PDBsum" id="8WI9"/>
<dbReference type="PDBsum" id="8WIB"/>
<dbReference type="PDBsum" id="8WID"/>
<dbReference type="PDBsum" id="8WIF"/>
<dbReference type="EMDB" id="EMD-29397"/>
<dbReference type="EMDB" id="EMD-3748"/>
<dbReference type="EMDB" id="EMD-3751"/>
<dbReference type="EMDB" id="EMD-37551"/>
<dbReference type="EMDB" id="EMD-37559"/>
<dbReference type="EMDB" id="EMD-37561"/>
<dbReference type="EMDB" id="EMD-37562"/>
<dbReference type="EMDB" id="EMD-37564"/>
<dbReference type="EMDB" id="EMD-37565"/>
<dbReference type="EMDB" id="EMD-43074"/>
<dbReference type="EMDB" id="EMD-43075"/>
<dbReference type="EMDB" id="EMD-43076"/>
<dbReference type="EMDB" id="EMD-43267"/>
<dbReference type="EMDB" id="EMD-6790"/>
<dbReference type="EMDB" id="EMD-6920"/>
<dbReference type="EMDB" id="EMD-6921"/>
<dbReference type="EMDB" id="EMD-6923"/>
<dbReference type="EMDB" id="EMD-8932"/>
<dbReference type="EMDB" id="EMD-8934"/>
<dbReference type="SMR" id="A0QSG3"/>
<dbReference type="IntAct" id="A0QSG3">
    <property type="interactions" value="1"/>
</dbReference>
<dbReference type="STRING" id="246196.MSMEG_1469"/>
<dbReference type="PaxDb" id="246196-MSMEI_1433"/>
<dbReference type="GeneID" id="93456311"/>
<dbReference type="KEGG" id="msb:LJ00_07340"/>
<dbReference type="KEGG" id="msg:MSMEI_1433"/>
<dbReference type="KEGG" id="msm:MSMEG_1469"/>
<dbReference type="PATRIC" id="fig|246196.19.peg.1454"/>
<dbReference type="eggNOG" id="COG0096">
    <property type="taxonomic scope" value="Bacteria"/>
</dbReference>
<dbReference type="OrthoDB" id="9802617at2"/>
<dbReference type="Proteomes" id="UP000000757">
    <property type="component" value="Chromosome"/>
</dbReference>
<dbReference type="Proteomes" id="UP000006158">
    <property type="component" value="Chromosome"/>
</dbReference>
<dbReference type="GO" id="GO:1990904">
    <property type="term" value="C:ribonucleoprotein complex"/>
    <property type="evidence" value="ECO:0007669"/>
    <property type="project" value="UniProtKB-KW"/>
</dbReference>
<dbReference type="GO" id="GO:0005840">
    <property type="term" value="C:ribosome"/>
    <property type="evidence" value="ECO:0007669"/>
    <property type="project" value="UniProtKB-KW"/>
</dbReference>
<dbReference type="GO" id="GO:0019843">
    <property type="term" value="F:rRNA binding"/>
    <property type="evidence" value="ECO:0007669"/>
    <property type="project" value="UniProtKB-UniRule"/>
</dbReference>
<dbReference type="GO" id="GO:0003735">
    <property type="term" value="F:structural constituent of ribosome"/>
    <property type="evidence" value="ECO:0007669"/>
    <property type="project" value="InterPro"/>
</dbReference>
<dbReference type="GO" id="GO:0006412">
    <property type="term" value="P:translation"/>
    <property type="evidence" value="ECO:0007669"/>
    <property type="project" value="UniProtKB-UniRule"/>
</dbReference>
<dbReference type="FunFam" id="3.30.1370.30:FF:000002">
    <property type="entry name" value="30S ribosomal protein S8"/>
    <property type="match status" value="1"/>
</dbReference>
<dbReference type="FunFam" id="3.30.1490.10:FF:000001">
    <property type="entry name" value="30S ribosomal protein S8"/>
    <property type="match status" value="1"/>
</dbReference>
<dbReference type="Gene3D" id="3.30.1370.30">
    <property type="match status" value="1"/>
</dbReference>
<dbReference type="Gene3D" id="3.30.1490.10">
    <property type="match status" value="1"/>
</dbReference>
<dbReference type="HAMAP" id="MF_01302_B">
    <property type="entry name" value="Ribosomal_uS8_B"/>
    <property type="match status" value="1"/>
</dbReference>
<dbReference type="InterPro" id="IPR000630">
    <property type="entry name" value="Ribosomal_uS8"/>
</dbReference>
<dbReference type="InterPro" id="IPR047863">
    <property type="entry name" value="Ribosomal_uS8_CS"/>
</dbReference>
<dbReference type="InterPro" id="IPR035987">
    <property type="entry name" value="Ribosomal_uS8_sf"/>
</dbReference>
<dbReference type="NCBIfam" id="NF001109">
    <property type="entry name" value="PRK00136.1"/>
    <property type="match status" value="1"/>
</dbReference>
<dbReference type="PANTHER" id="PTHR11758">
    <property type="entry name" value="40S RIBOSOMAL PROTEIN S15A"/>
    <property type="match status" value="1"/>
</dbReference>
<dbReference type="Pfam" id="PF00410">
    <property type="entry name" value="Ribosomal_S8"/>
    <property type="match status" value="1"/>
</dbReference>
<dbReference type="SUPFAM" id="SSF56047">
    <property type="entry name" value="Ribosomal protein S8"/>
    <property type="match status" value="1"/>
</dbReference>
<dbReference type="PROSITE" id="PS00053">
    <property type="entry name" value="RIBOSOMAL_S8"/>
    <property type="match status" value="1"/>
</dbReference>
<name>RS8_MYCS2</name>
<accession>A0QSG3</accession>
<accession>I7G432</accession>
<protein>
    <recommendedName>
        <fullName evidence="1">Small ribosomal subunit protein uS8</fullName>
    </recommendedName>
    <alternativeName>
        <fullName evidence="3">30S ribosomal protein S8</fullName>
    </alternativeName>
</protein>
<proteinExistence type="evidence at protein level"/>